<protein>
    <recommendedName>
        <fullName evidence="1">Cell division protein ZipA</fullName>
    </recommendedName>
</protein>
<organism>
    <name type="scientific">Shewanella loihica (strain ATCC BAA-1088 / PV-4)</name>
    <dbReference type="NCBI Taxonomy" id="323850"/>
    <lineage>
        <taxon>Bacteria</taxon>
        <taxon>Pseudomonadati</taxon>
        <taxon>Pseudomonadota</taxon>
        <taxon>Gammaproteobacteria</taxon>
        <taxon>Alteromonadales</taxon>
        <taxon>Shewanellaceae</taxon>
        <taxon>Shewanella</taxon>
    </lineage>
</organism>
<gene>
    <name evidence="1" type="primary">zipA</name>
    <name type="ordered locus">Shew_2378</name>
</gene>
<reference key="1">
    <citation type="submission" date="2007-03" db="EMBL/GenBank/DDBJ databases">
        <title>Complete sequence of Shewanella loihica PV-4.</title>
        <authorList>
            <consortium name="US DOE Joint Genome Institute"/>
            <person name="Copeland A."/>
            <person name="Lucas S."/>
            <person name="Lapidus A."/>
            <person name="Barry K."/>
            <person name="Detter J.C."/>
            <person name="Glavina del Rio T."/>
            <person name="Hammon N."/>
            <person name="Israni S."/>
            <person name="Dalin E."/>
            <person name="Tice H."/>
            <person name="Pitluck S."/>
            <person name="Chain P."/>
            <person name="Malfatti S."/>
            <person name="Shin M."/>
            <person name="Vergez L."/>
            <person name="Schmutz J."/>
            <person name="Larimer F."/>
            <person name="Land M."/>
            <person name="Hauser L."/>
            <person name="Kyrpides N."/>
            <person name="Mikhailova N."/>
            <person name="Romine M.F."/>
            <person name="Serres G."/>
            <person name="Fredrickson J."/>
            <person name="Tiedje J."/>
            <person name="Richardson P."/>
        </authorList>
    </citation>
    <scope>NUCLEOTIDE SEQUENCE [LARGE SCALE GENOMIC DNA]</scope>
    <source>
        <strain>ATCC BAA-1088 / PV-4</strain>
    </source>
</reference>
<feature type="chain" id="PRO_1000015156" description="Cell division protein ZipA">
    <location>
        <begin position="1"/>
        <end position="335"/>
    </location>
</feature>
<feature type="topological domain" description="Periplasmic" evidence="1">
    <location>
        <begin position="1"/>
        <end position="6"/>
    </location>
</feature>
<feature type="transmembrane region" description="Helical" evidence="1">
    <location>
        <begin position="7"/>
        <end position="27"/>
    </location>
</feature>
<feature type="topological domain" description="Cytoplasmic" evidence="1">
    <location>
        <begin position="28"/>
        <end position="335"/>
    </location>
</feature>
<feature type="region of interest" description="Disordered" evidence="2">
    <location>
        <begin position="37"/>
        <end position="128"/>
    </location>
</feature>
<feature type="region of interest" description="Disordered" evidence="2">
    <location>
        <begin position="163"/>
        <end position="185"/>
    </location>
</feature>
<feature type="compositionally biased region" description="Low complexity" evidence="2">
    <location>
        <begin position="170"/>
        <end position="185"/>
    </location>
</feature>
<comment type="function">
    <text evidence="1">Essential cell division protein that stabilizes the FtsZ protofilaments by cross-linking them and that serves as a cytoplasmic membrane anchor for the Z ring. Also required for the recruitment to the septal ring of downstream cell division proteins.</text>
</comment>
<comment type="subunit">
    <text evidence="1">Interacts with FtsZ via their C-terminal domains.</text>
</comment>
<comment type="subcellular location">
    <subcellularLocation>
        <location evidence="1">Cell inner membrane</location>
        <topology evidence="1">Single-pass type I membrane protein</topology>
    </subcellularLocation>
    <text evidence="1">Localizes to the Z ring in an FtsZ-dependent manner.</text>
</comment>
<comment type="similarity">
    <text evidence="1">Belongs to the ZipA family.</text>
</comment>
<sequence length="335" mass="36350">MENLQLVLFVLGAVAIIAVLVHGFWSIRRQQPKSLKESPMTGLYTDKTRDSDGFDADGVGPVRVVKNNAEQGIPKATSTSRATPFGARAQESEPADVSPSFSLSDEPKQKAPRSRQEPVMSATPNEEVSDAHLEQMELGLGQAPAQPSLFEDPVTERKQEAVRPAPRVEAPQSVAPASVEPVSVEPEPAPKVAEETPLGDPQDVLVLHVVAKEGEALNGAELLPSLLTLNFKFGDMDIFHRHEDNAGTGKVLFSLANMVKPGVFNPDEMEQFTTQGIVLFMTLPCYGDPLMNFSIMLNSAHQLADDLGGEVLDGGRGAWSEQTKQSYLQRIRAQM</sequence>
<name>ZIPA_SHELP</name>
<keyword id="KW-0131">Cell cycle</keyword>
<keyword id="KW-0132">Cell division</keyword>
<keyword id="KW-0997">Cell inner membrane</keyword>
<keyword id="KW-1003">Cell membrane</keyword>
<keyword id="KW-0472">Membrane</keyword>
<keyword id="KW-1185">Reference proteome</keyword>
<keyword id="KW-0812">Transmembrane</keyword>
<keyword id="KW-1133">Transmembrane helix</keyword>
<proteinExistence type="inferred from homology"/>
<dbReference type="EMBL" id="CP000606">
    <property type="protein sequence ID" value="ABO24244.1"/>
    <property type="molecule type" value="Genomic_DNA"/>
</dbReference>
<dbReference type="RefSeq" id="WP_011866175.1">
    <property type="nucleotide sequence ID" value="NC_009092.1"/>
</dbReference>
<dbReference type="SMR" id="A3QFJ6"/>
<dbReference type="STRING" id="323850.Shew_2378"/>
<dbReference type="KEGG" id="slo:Shew_2378"/>
<dbReference type="eggNOG" id="COG3115">
    <property type="taxonomic scope" value="Bacteria"/>
</dbReference>
<dbReference type="HOGENOM" id="CLU_030174_1_0_6"/>
<dbReference type="OrthoDB" id="7054914at2"/>
<dbReference type="Proteomes" id="UP000001558">
    <property type="component" value="Chromosome"/>
</dbReference>
<dbReference type="GO" id="GO:0032153">
    <property type="term" value="C:cell division site"/>
    <property type="evidence" value="ECO:0007669"/>
    <property type="project" value="UniProtKB-UniRule"/>
</dbReference>
<dbReference type="GO" id="GO:0005886">
    <property type="term" value="C:plasma membrane"/>
    <property type="evidence" value="ECO:0007669"/>
    <property type="project" value="UniProtKB-SubCell"/>
</dbReference>
<dbReference type="GO" id="GO:0000917">
    <property type="term" value="P:division septum assembly"/>
    <property type="evidence" value="ECO:0007669"/>
    <property type="project" value="TreeGrafter"/>
</dbReference>
<dbReference type="GO" id="GO:0043093">
    <property type="term" value="P:FtsZ-dependent cytokinesis"/>
    <property type="evidence" value="ECO:0007669"/>
    <property type="project" value="UniProtKB-UniRule"/>
</dbReference>
<dbReference type="Gene3D" id="3.30.1400.10">
    <property type="entry name" value="ZipA, C-terminal FtsZ-binding domain"/>
    <property type="match status" value="1"/>
</dbReference>
<dbReference type="HAMAP" id="MF_00509">
    <property type="entry name" value="ZipA"/>
    <property type="match status" value="1"/>
</dbReference>
<dbReference type="InterPro" id="IPR011919">
    <property type="entry name" value="Cell_div_ZipA"/>
</dbReference>
<dbReference type="InterPro" id="IPR007449">
    <property type="entry name" value="ZipA_FtsZ-bd_C"/>
</dbReference>
<dbReference type="InterPro" id="IPR036765">
    <property type="entry name" value="ZipA_FtsZ-bd_C_sf"/>
</dbReference>
<dbReference type="NCBIfam" id="TIGR02205">
    <property type="entry name" value="septum_zipA"/>
    <property type="match status" value="1"/>
</dbReference>
<dbReference type="PANTHER" id="PTHR38685">
    <property type="entry name" value="CELL DIVISION PROTEIN ZIPA"/>
    <property type="match status" value="1"/>
</dbReference>
<dbReference type="PANTHER" id="PTHR38685:SF1">
    <property type="entry name" value="CELL DIVISION PROTEIN ZIPA"/>
    <property type="match status" value="1"/>
</dbReference>
<dbReference type="Pfam" id="PF04354">
    <property type="entry name" value="ZipA_C"/>
    <property type="match status" value="1"/>
</dbReference>
<dbReference type="SMART" id="SM00771">
    <property type="entry name" value="ZipA_C"/>
    <property type="match status" value="1"/>
</dbReference>
<dbReference type="SUPFAM" id="SSF64383">
    <property type="entry name" value="Cell-division protein ZipA, C-terminal domain"/>
    <property type="match status" value="1"/>
</dbReference>
<evidence type="ECO:0000255" key="1">
    <source>
        <dbReference type="HAMAP-Rule" id="MF_00509"/>
    </source>
</evidence>
<evidence type="ECO:0000256" key="2">
    <source>
        <dbReference type="SAM" id="MobiDB-lite"/>
    </source>
</evidence>
<accession>A3QFJ6</accession>